<evidence type="ECO:0000255" key="1">
    <source>
        <dbReference type="HAMAP-Rule" id="MF_00220"/>
    </source>
</evidence>
<keyword id="KW-0378">Hydrolase</keyword>
<keyword id="KW-0479">Metal-binding</keyword>
<keyword id="KW-0665">Pyrimidine biosynthesis</keyword>
<keyword id="KW-0862">Zinc</keyword>
<feature type="chain" id="PRO_0000147239" description="Dihydroorotase">
    <location>
        <begin position="1"/>
        <end position="426"/>
    </location>
</feature>
<feature type="active site" evidence="1">
    <location>
        <position position="303"/>
    </location>
</feature>
<feature type="binding site" evidence="1">
    <location>
        <position position="58"/>
    </location>
    <ligand>
        <name>Zn(2+)</name>
        <dbReference type="ChEBI" id="CHEBI:29105"/>
        <label>1</label>
    </ligand>
</feature>
<feature type="binding site" evidence="1">
    <location>
        <begin position="60"/>
        <end position="62"/>
    </location>
    <ligand>
        <name>substrate</name>
    </ligand>
</feature>
<feature type="binding site" evidence="1">
    <location>
        <position position="60"/>
    </location>
    <ligand>
        <name>Zn(2+)</name>
        <dbReference type="ChEBI" id="CHEBI:29105"/>
        <label>1</label>
    </ligand>
</feature>
<feature type="binding site" evidence="1">
    <location>
        <position position="92"/>
    </location>
    <ligand>
        <name>substrate</name>
    </ligand>
</feature>
<feature type="binding site" evidence="1">
    <location>
        <position position="150"/>
    </location>
    <ligand>
        <name>Zn(2+)</name>
        <dbReference type="ChEBI" id="CHEBI:29105"/>
        <label>1</label>
    </ligand>
</feature>
<feature type="binding site" evidence="1">
    <location>
        <position position="150"/>
    </location>
    <ligand>
        <name>Zn(2+)</name>
        <dbReference type="ChEBI" id="CHEBI:29105"/>
        <label>2</label>
    </ligand>
</feature>
<feature type="binding site" evidence="1">
    <location>
        <position position="177"/>
    </location>
    <ligand>
        <name>Zn(2+)</name>
        <dbReference type="ChEBI" id="CHEBI:29105"/>
        <label>2</label>
    </ligand>
</feature>
<feature type="binding site" evidence="1">
    <location>
        <position position="230"/>
    </location>
    <ligand>
        <name>Zn(2+)</name>
        <dbReference type="ChEBI" id="CHEBI:29105"/>
        <label>2</label>
    </ligand>
</feature>
<feature type="binding site" evidence="1">
    <location>
        <position position="276"/>
    </location>
    <ligand>
        <name>substrate</name>
    </ligand>
</feature>
<feature type="binding site" evidence="1">
    <location>
        <position position="303"/>
    </location>
    <ligand>
        <name>Zn(2+)</name>
        <dbReference type="ChEBI" id="CHEBI:29105"/>
        <label>1</label>
    </ligand>
</feature>
<feature type="binding site" evidence="1">
    <location>
        <position position="307"/>
    </location>
    <ligand>
        <name>substrate</name>
    </ligand>
</feature>
<feature type="binding site" evidence="1">
    <location>
        <begin position="321"/>
        <end position="322"/>
    </location>
    <ligand>
        <name>substrate</name>
    </ligand>
</feature>
<protein>
    <recommendedName>
        <fullName evidence="1">Dihydroorotase</fullName>
        <shortName evidence="1">DHOase</shortName>
        <ecNumber evidence="1">3.5.2.3</ecNumber>
    </recommendedName>
</protein>
<organism>
    <name type="scientific">Listeria innocua serovar 6a (strain ATCC BAA-680 / CLIP 11262)</name>
    <dbReference type="NCBI Taxonomy" id="272626"/>
    <lineage>
        <taxon>Bacteria</taxon>
        <taxon>Bacillati</taxon>
        <taxon>Bacillota</taxon>
        <taxon>Bacilli</taxon>
        <taxon>Bacillales</taxon>
        <taxon>Listeriaceae</taxon>
        <taxon>Listeria</taxon>
    </lineage>
</organism>
<dbReference type="EC" id="3.5.2.3" evidence="1"/>
<dbReference type="EMBL" id="AL596170">
    <property type="protein sequence ID" value="CAC97181.1"/>
    <property type="molecule type" value="Genomic_DNA"/>
</dbReference>
<dbReference type="PIR" id="AE1676">
    <property type="entry name" value="AE1676"/>
</dbReference>
<dbReference type="RefSeq" id="WP_010991678.1">
    <property type="nucleotide sequence ID" value="NC_003212.1"/>
</dbReference>
<dbReference type="SMR" id="Q92AH1"/>
<dbReference type="STRING" id="272626.gene:17566309"/>
<dbReference type="KEGG" id="lin:pyrC"/>
<dbReference type="eggNOG" id="COG0044">
    <property type="taxonomic scope" value="Bacteria"/>
</dbReference>
<dbReference type="HOGENOM" id="CLU_015572_1_0_9"/>
<dbReference type="OrthoDB" id="9765462at2"/>
<dbReference type="UniPathway" id="UPA00070">
    <property type="reaction ID" value="UER00117"/>
</dbReference>
<dbReference type="Proteomes" id="UP000002513">
    <property type="component" value="Chromosome"/>
</dbReference>
<dbReference type="GO" id="GO:0005737">
    <property type="term" value="C:cytoplasm"/>
    <property type="evidence" value="ECO:0007669"/>
    <property type="project" value="TreeGrafter"/>
</dbReference>
<dbReference type="GO" id="GO:0004038">
    <property type="term" value="F:allantoinase activity"/>
    <property type="evidence" value="ECO:0007669"/>
    <property type="project" value="TreeGrafter"/>
</dbReference>
<dbReference type="GO" id="GO:0004151">
    <property type="term" value="F:dihydroorotase activity"/>
    <property type="evidence" value="ECO:0007669"/>
    <property type="project" value="UniProtKB-UniRule"/>
</dbReference>
<dbReference type="GO" id="GO:0008270">
    <property type="term" value="F:zinc ion binding"/>
    <property type="evidence" value="ECO:0007669"/>
    <property type="project" value="UniProtKB-UniRule"/>
</dbReference>
<dbReference type="GO" id="GO:0044205">
    <property type="term" value="P:'de novo' UMP biosynthetic process"/>
    <property type="evidence" value="ECO:0007669"/>
    <property type="project" value="UniProtKB-UniRule"/>
</dbReference>
<dbReference type="GO" id="GO:0006145">
    <property type="term" value="P:purine nucleobase catabolic process"/>
    <property type="evidence" value="ECO:0007669"/>
    <property type="project" value="TreeGrafter"/>
</dbReference>
<dbReference type="CDD" id="cd01317">
    <property type="entry name" value="DHOase_IIa"/>
    <property type="match status" value="1"/>
</dbReference>
<dbReference type="Gene3D" id="3.20.20.140">
    <property type="entry name" value="Metal-dependent hydrolases"/>
    <property type="match status" value="1"/>
</dbReference>
<dbReference type="Gene3D" id="2.30.40.10">
    <property type="entry name" value="Urease, subunit C, domain 1"/>
    <property type="match status" value="1"/>
</dbReference>
<dbReference type="HAMAP" id="MF_00220_B">
    <property type="entry name" value="PyrC_classI_B"/>
    <property type="match status" value="1"/>
</dbReference>
<dbReference type="InterPro" id="IPR006680">
    <property type="entry name" value="Amidohydro-rel"/>
</dbReference>
<dbReference type="InterPro" id="IPR004722">
    <property type="entry name" value="DHOase"/>
</dbReference>
<dbReference type="InterPro" id="IPR050138">
    <property type="entry name" value="DHOase/Allantoinase_Hydrolase"/>
</dbReference>
<dbReference type="InterPro" id="IPR002195">
    <property type="entry name" value="Dihydroorotase_CS"/>
</dbReference>
<dbReference type="InterPro" id="IPR011059">
    <property type="entry name" value="Metal-dep_hydrolase_composite"/>
</dbReference>
<dbReference type="InterPro" id="IPR032466">
    <property type="entry name" value="Metal_Hydrolase"/>
</dbReference>
<dbReference type="NCBIfam" id="NF006837">
    <property type="entry name" value="PRK09357.1-2"/>
    <property type="match status" value="1"/>
</dbReference>
<dbReference type="NCBIfam" id="TIGR00857">
    <property type="entry name" value="pyrC_multi"/>
    <property type="match status" value="1"/>
</dbReference>
<dbReference type="PANTHER" id="PTHR43668">
    <property type="entry name" value="ALLANTOINASE"/>
    <property type="match status" value="1"/>
</dbReference>
<dbReference type="PANTHER" id="PTHR43668:SF2">
    <property type="entry name" value="ALLANTOINASE"/>
    <property type="match status" value="1"/>
</dbReference>
<dbReference type="Pfam" id="PF01979">
    <property type="entry name" value="Amidohydro_1"/>
    <property type="match status" value="1"/>
</dbReference>
<dbReference type="SUPFAM" id="SSF51338">
    <property type="entry name" value="Composite domain of metallo-dependent hydrolases"/>
    <property type="match status" value="1"/>
</dbReference>
<dbReference type="SUPFAM" id="SSF51556">
    <property type="entry name" value="Metallo-dependent hydrolases"/>
    <property type="match status" value="1"/>
</dbReference>
<dbReference type="PROSITE" id="PS00482">
    <property type="entry name" value="DIHYDROOROTASE_1"/>
    <property type="match status" value="1"/>
</dbReference>
<dbReference type="PROSITE" id="PS00483">
    <property type="entry name" value="DIHYDROOROTASE_2"/>
    <property type="match status" value="1"/>
</dbReference>
<name>PYRC_LISIN</name>
<comment type="function">
    <text evidence="1">Catalyzes the reversible cyclization of carbamoyl aspartate to dihydroorotate.</text>
</comment>
<comment type="catalytic activity">
    <reaction evidence="1">
        <text>(S)-dihydroorotate + H2O = N-carbamoyl-L-aspartate + H(+)</text>
        <dbReference type="Rhea" id="RHEA:24296"/>
        <dbReference type="ChEBI" id="CHEBI:15377"/>
        <dbReference type="ChEBI" id="CHEBI:15378"/>
        <dbReference type="ChEBI" id="CHEBI:30864"/>
        <dbReference type="ChEBI" id="CHEBI:32814"/>
        <dbReference type="EC" id="3.5.2.3"/>
    </reaction>
</comment>
<comment type="cofactor">
    <cofactor evidence="1">
        <name>Zn(2+)</name>
        <dbReference type="ChEBI" id="CHEBI:29105"/>
    </cofactor>
    <text evidence="1">Binds 2 Zn(2+) ions per subunit.</text>
</comment>
<comment type="pathway">
    <text evidence="1">Pyrimidine metabolism; UMP biosynthesis via de novo pathway; (S)-dihydroorotate from bicarbonate: step 3/3.</text>
</comment>
<comment type="similarity">
    <text evidence="1">Belongs to the metallo-dependent hydrolases superfamily. DHOase family. Class I DHOase subfamily.</text>
</comment>
<reference key="1">
    <citation type="journal article" date="2001" name="Science">
        <title>Comparative genomics of Listeria species.</title>
        <authorList>
            <person name="Glaser P."/>
            <person name="Frangeul L."/>
            <person name="Buchrieser C."/>
            <person name="Rusniok C."/>
            <person name="Amend A."/>
            <person name="Baquero F."/>
            <person name="Berche P."/>
            <person name="Bloecker H."/>
            <person name="Brandt P."/>
            <person name="Chakraborty T."/>
            <person name="Charbit A."/>
            <person name="Chetouani F."/>
            <person name="Couve E."/>
            <person name="de Daruvar A."/>
            <person name="Dehoux P."/>
            <person name="Domann E."/>
            <person name="Dominguez-Bernal G."/>
            <person name="Duchaud E."/>
            <person name="Durant L."/>
            <person name="Dussurget O."/>
            <person name="Entian K.-D."/>
            <person name="Fsihi H."/>
            <person name="Garcia-del Portillo F."/>
            <person name="Garrido P."/>
            <person name="Gautier L."/>
            <person name="Goebel W."/>
            <person name="Gomez-Lopez N."/>
            <person name="Hain T."/>
            <person name="Hauf J."/>
            <person name="Jackson D."/>
            <person name="Jones L.-M."/>
            <person name="Kaerst U."/>
            <person name="Kreft J."/>
            <person name="Kuhn M."/>
            <person name="Kunst F."/>
            <person name="Kurapkat G."/>
            <person name="Madueno E."/>
            <person name="Maitournam A."/>
            <person name="Mata Vicente J."/>
            <person name="Ng E."/>
            <person name="Nedjari H."/>
            <person name="Nordsiek G."/>
            <person name="Novella S."/>
            <person name="de Pablos B."/>
            <person name="Perez-Diaz J.-C."/>
            <person name="Purcell R."/>
            <person name="Remmel B."/>
            <person name="Rose M."/>
            <person name="Schlueter T."/>
            <person name="Simoes N."/>
            <person name="Tierrez A."/>
            <person name="Vazquez-Boland J.-A."/>
            <person name="Voss H."/>
            <person name="Wehland J."/>
            <person name="Cossart P."/>
        </authorList>
    </citation>
    <scope>NUCLEOTIDE SEQUENCE [LARGE SCALE GENOMIC DNA]</scope>
    <source>
        <strain>ATCC BAA-680 / CLIP 11262</strain>
    </source>
</reference>
<gene>
    <name evidence="1" type="primary">pyrC</name>
    <name type="ordered locus">lin1951</name>
</gene>
<sequence>MYVLKNGQVLNESGELENKDVLIQNGKVNLIADSIEVTSGEEFDATGKLIAPGFIDVHVHLREPGGEHKETILTGTKAAARGGYTTICSMPNTKPVPDSKEVMNSLQAKIKETAEVRVLPYASITTSLGTDELVDFEALKEAGAFAFTDDGVGVQLAGTMYEAMKRAAALDMAIVAHCEDNSLIYGGVVHDGIFAEKEGLKGIPNIAESVQIARDVLLAEAAGCHYHVCHISTKESVRVVRDAKRAGIRVTAEVSPHHLILDEEDIPGNDGNWKMNPPLRSKEDRAALLEGLLDGTIDFIATDHAPHAAEEKNVPMEQAAFGIVGLETAFPLLYTHFVKTNEWTLKQLIDWMTVKPAECFKLPYGKLEEGAVADIVVLDLEKEATIDPATFYSKGKNTPFVGETCIGWPVATFAEGELVYNEGENK</sequence>
<proteinExistence type="inferred from homology"/>
<accession>Q92AH1</accession>